<name>MCSB_LISW6</name>
<comment type="function">
    <text evidence="1">Catalyzes the specific phosphorylation of arginine residues in proteins.</text>
</comment>
<comment type="catalytic activity">
    <reaction evidence="1">
        <text>L-arginyl-[protein] + ATP = N(omega)-phospho-L-arginyl-[protein] + ADP + H(+)</text>
        <dbReference type="Rhea" id="RHEA:43384"/>
        <dbReference type="Rhea" id="RHEA-COMP:10532"/>
        <dbReference type="Rhea" id="RHEA-COMP:10533"/>
        <dbReference type="ChEBI" id="CHEBI:15378"/>
        <dbReference type="ChEBI" id="CHEBI:29965"/>
        <dbReference type="ChEBI" id="CHEBI:30616"/>
        <dbReference type="ChEBI" id="CHEBI:83226"/>
        <dbReference type="ChEBI" id="CHEBI:456216"/>
        <dbReference type="EC" id="2.7.14.1"/>
    </reaction>
</comment>
<comment type="similarity">
    <text evidence="1">Belongs to the ATP:guanido phosphotransferase family.</text>
</comment>
<accession>A0AF31</accession>
<proteinExistence type="inferred from homology"/>
<reference key="1">
    <citation type="journal article" date="2006" name="J. Bacteriol.">
        <title>Whole-genome sequence of Listeria welshimeri reveals common steps in genome reduction with Listeria innocua as compared to Listeria monocytogenes.</title>
        <authorList>
            <person name="Hain T."/>
            <person name="Steinweg C."/>
            <person name="Kuenne C.T."/>
            <person name="Billion A."/>
            <person name="Ghai R."/>
            <person name="Chatterjee S.S."/>
            <person name="Domann E."/>
            <person name="Kaerst U."/>
            <person name="Goesmann A."/>
            <person name="Bekel T."/>
            <person name="Bartels D."/>
            <person name="Kaiser O."/>
            <person name="Meyer F."/>
            <person name="Puehler A."/>
            <person name="Weisshaar B."/>
            <person name="Wehland J."/>
            <person name="Liang C."/>
            <person name="Dandekar T."/>
            <person name="Lampidis R."/>
            <person name="Kreft J."/>
            <person name="Goebel W."/>
            <person name="Chakraborty T."/>
        </authorList>
    </citation>
    <scope>NUCLEOTIDE SEQUENCE [LARGE SCALE GENOMIC DNA]</scope>
    <source>
        <strain>ATCC 35897 / DSM 20650 / CCUG 15529 / CIP 8149 / NCTC 11857 / SLCC 5334 / V8</strain>
    </source>
</reference>
<dbReference type="EC" id="2.7.14.1" evidence="1"/>
<dbReference type="EMBL" id="AM263198">
    <property type="protein sequence ID" value="CAK19613.1"/>
    <property type="molecule type" value="Genomic_DNA"/>
</dbReference>
<dbReference type="RefSeq" id="WP_011701058.1">
    <property type="nucleotide sequence ID" value="NC_008555.1"/>
</dbReference>
<dbReference type="SMR" id="A0AF31"/>
<dbReference type="STRING" id="386043.lwe0195"/>
<dbReference type="GeneID" id="61188088"/>
<dbReference type="KEGG" id="lwe:lwe0195"/>
<dbReference type="eggNOG" id="COG3869">
    <property type="taxonomic scope" value="Bacteria"/>
</dbReference>
<dbReference type="HOGENOM" id="CLU_066591_1_0_9"/>
<dbReference type="OrthoDB" id="9791353at2"/>
<dbReference type="Proteomes" id="UP000000779">
    <property type="component" value="Chromosome"/>
</dbReference>
<dbReference type="GO" id="GO:0005615">
    <property type="term" value="C:extracellular space"/>
    <property type="evidence" value="ECO:0007669"/>
    <property type="project" value="TreeGrafter"/>
</dbReference>
<dbReference type="GO" id="GO:0005524">
    <property type="term" value="F:ATP binding"/>
    <property type="evidence" value="ECO:0007669"/>
    <property type="project" value="UniProtKB-KW"/>
</dbReference>
<dbReference type="GO" id="GO:0004111">
    <property type="term" value="F:creatine kinase activity"/>
    <property type="evidence" value="ECO:0007669"/>
    <property type="project" value="InterPro"/>
</dbReference>
<dbReference type="GO" id="GO:0004672">
    <property type="term" value="F:protein kinase activity"/>
    <property type="evidence" value="ECO:0007669"/>
    <property type="project" value="UniProtKB-UniRule"/>
</dbReference>
<dbReference type="GO" id="GO:0046314">
    <property type="term" value="P:phosphocreatine biosynthetic process"/>
    <property type="evidence" value="ECO:0007669"/>
    <property type="project" value="InterPro"/>
</dbReference>
<dbReference type="CDD" id="cd07930">
    <property type="entry name" value="bacterial_phosphagen_kinase"/>
    <property type="match status" value="1"/>
</dbReference>
<dbReference type="FunFam" id="3.30.590.10:FF:000007">
    <property type="entry name" value="Protein-arginine kinase"/>
    <property type="match status" value="1"/>
</dbReference>
<dbReference type="Gene3D" id="3.30.590.10">
    <property type="entry name" value="Glutamine synthetase/guanido kinase, catalytic domain"/>
    <property type="match status" value="1"/>
</dbReference>
<dbReference type="HAMAP" id="MF_00602">
    <property type="entry name" value="Prot_Arg_kinase"/>
    <property type="match status" value="1"/>
</dbReference>
<dbReference type="InterPro" id="IPR023660">
    <property type="entry name" value="Arg_Kinase"/>
</dbReference>
<dbReference type="InterPro" id="IPR000749">
    <property type="entry name" value="ATP-guanido_PTrfase"/>
</dbReference>
<dbReference type="InterPro" id="IPR022414">
    <property type="entry name" value="ATP-guanido_PTrfase_cat"/>
</dbReference>
<dbReference type="InterPro" id="IPR014746">
    <property type="entry name" value="Gln_synth/guanido_kin_cat_dom"/>
</dbReference>
<dbReference type="NCBIfam" id="NF002192">
    <property type="entry name" value="PRK01059.1-2"/>
    <property type="match status" value="1"/>
</dbReference>
<dbReference type="NCBIfam" id="NF002194">
    <property type="entry name" value="PRK01059.1-4"/>
    <property type="match status" value="1"/>
</dbReference>
<dbReference type="PANTHER" id="PTHR11547:SF38">
    <property type="entry name" value="ARGININE KINASE 1-RELATED"/>
    <property type="match status" value="1"/>
</dbReference>
<dbReference type="PANTHER" id="PTHR11547">
    <property type="entry name" value="ARGININE OR CREATINE KINASE"/>
    <property type="match status" value="1"/>
</dbReference>
<dbReference type="Pfam" id="PF00217">
    <property type="entry name" value="ATP-gua_Ptrans"/>
    <property type="match status" value="1"/>
</dbReference>
<dbReference type="SUPFAM" id="SSF55931">
    <property type="entry name" value="Glutamine synthetase/guanido kinase"/>
    <property type="match status" value="1"/>
</dbReference>
<dbReference type="PROSITE" id="PS51510">
    <property type="entry name" value="PHOSPHAGEN_KINASE_C"/>
    <property type="match status" value="1"/>
</dbReference>
<gene>
    <name evidence="1" type="primary">mcsB</name>
    <name type="ordered locus">lwe0195</name>
</gene>
<evidence type="ECO:0000255" key="1">
    <source>
        <dbReference type="HAMAP-Rule" id="MF_00602"/>
    </source>
</evidence>
<sequence>MNVFEPRLSSWLVNSGDDDDVVLSSRIRLARNLKDERFPIYEQKEAIVDNIAEVFDENFTLFKMNQISVLQKALLVEKHLISPYMMKKSKYGAVLLNEEENVSIMLNEEDHLRIQCMTPGLRLFDALEAALQIDGHVEEKLTYAFDKQFGYLTSCVTNIGTGLRASVMVHLPGLVTTKRIKSVIEAIRSLGFVVRGIYGEGSMPASSIFQVSNQVTLGKTETEIVEDLTQVMEQIIMQERVARTTLKQKFHIALEDRVFRSYGLLMNCRIISMQEAADAISDIRLGVELGFFEHISRQKMNELVLFSQPAFLRKEAGRDMDELEEKVIRAKVIREILGDK</sequence>
<organism>
    <name type="scientific">Listeria welshimeri serovar 6b (strain ATCC 35897 / DSM 20650 / CCUG 15529 / CIP 8149 / NCTC 11857 / SLCC 5334 / V8)</name>
    <dbReference type="NCBI Taxonomy" id="386043"/>
    <lineage>
        <taxon>Bacteria</taxon>
        <taxon>Bacillati</taxon>
        <taxon>Bacillota</taxon>
        <taxon>Bacilli</taxon>
        <taxon>Bacillales</taxon>
        <taxon>Listeriaceae</taxon>
        <taxon>Listeria</taxon>
    </lineage>
</organism>
<protein>
    <recommendedName>
        <fullName evidence="1">Protein-arginine kinase</fullName>
        <ecNumber evidence="1">2.7.14.1</ecNumber>
    </recommendedName>
</protein>
<feature type="chain" id="PRO_1000025876" description="Protein-arginine kinase">
    <location>
        <begin position="1"/>
        <end position="340"/>
    </location>
</feature>
<feature type="domain" description="Phosphagen kinase C-terminal" evidence="1">
    <location>
        <begin position="21"/>
        <end position="242"/>
    </location>
</feature>
<feature type="binding site" evidence="1">
    <location>
        <begin position="24"/>
        <end position="28"/>
    </location>
    <ligand>
        <name>ATP</name>
        <dbReference type="ChEBI" id="CHEBI:30616"/>
    </ligand>
</feature>
<feature type="binding site" evidence="1">
    <location>
        <position position="79"/>
    </location>
    <ligand>
        <name>ATP</name>
        <dbReference type="ChEBI" id="CHEBI:30616"/>
    </ligand>
</feature>
<feature type="binding site" evidence="1">
    <location>
        <position position="113"/>
    </location>
    <ligand>
        <name>ATP</name>
        <dbReference type="ChEBI" id="CHEBI:30616"/>
    </ligand>
</feature>
<feature type="binding site" evidence="1">
    <location>
        <begin position="164"/>
        <end position="168"/>
    </location>
    <ligand>
        <name>ATP</name>
        <dbReference type="ChEBI" id="CHEBI:30616"/>
    </ligand>
</feature>
<feature type="binding site" evidence="1">
    <location>
        <begin position="195"/>
        <end position="200"/>
    </location>
    <ligand>
        <name>ATP</name>
        <dbReference type="ChEBI" id="CHEBI:30616"/>
    </ligand>
</feature>
<keyword id="KW-0067">ATP-binding</keyword>
<keyword id="KW-0418">Kinase</keyword>
<keyword id="KW-0547">Nucleotide-binding</keyword>
<keyword id="KW-0808">Transferase</keyword>